<sequence>MSGNTGERPFADIITSIRYWVIHSITIPSLFIAGWLFVSTGLAYDVFGSPRPNEYFTESRQEIPLITGRFNSLEQVDEFTRSL</sequence>
<accession>Q5SD43</accession>
<reference key="1">
    <citation type="journal article" date="2005" name="Gene">
        <title>The first complete chloroplast genome sequence of a lycophyte, Huperzia lucidula (Lycopodiaceae).</title>
        <authorList>
            <person name="Wolf P.G."/>
            <person name="Karol K.G."/>
            <person name="Mandoli D.F."/>
            <person name="Kuehl J.V."/>
            <person name="Arumuganathan K."/>
            <person name="Ellis M.W."/>
            <person name="Mishler B.D."/>
            <person name="Kelch D.G."/>
            <person name="Olmstead R.G."/>
            <person name="Boore J.L."/>
        </authorList>
    </citation>
    <scope>NUCLEOTIDE SEQUENCE [LARGE SCALE GENOMIC DNA]</scope>
</reference>
<evidence type="ECO:0000255" key="1">
    <source>
        <dbReference type="HAMAP-Rule" id="MF_00642"/>
    </source>
</evidence>
<gene>
    <name evidence="1" type="primary">psbE</name>
</gene>
<keyword id="KW-0150">Chloroplast</keyword>
<keyword id="KW-0249">Electron transport</keyword>
<keyword id="KW-0349">Heme</keyword>
<keyword id="KW-0408">Iron</keyword>
<keyword id="KW-0472">Membrane</keyword>
<keyword id="KW-0479">Metal-binding</keyword>
<keyword id="KW-0602">Photosynthesis</keyword>
<keyword id="KW-0604">Photosystem II</keyword>
<keyword id="KW-0934">Plastid</keyword>
<keyword id="KW-0793">Thylakoid</keyword>
<keyword id="KW-0812">Transmembrane</keyword>
<keyword id="KW-1133">Transmembrane helix</keyword>
<keyword id="KW-0813">Transport</keyword>
<feature type="chain" id="PRO_0000200314" description="Cytochrome b559 subunit alpha">
    <location>
        <begin position="1"/>
        <end position="83"/>
    </location>
</feature>
<feature type="transmembrane region" description="Helical" evidence="1">
    <location>
        <begin position="21"/>
        <end position="35"/>
    </location>
</feature>
<feature type="binding site" description="axial binding residue" evidence="1">
    <location>
        <position position="23"/>
    </location>
    <ligand>
        <name>heme</name>
        <dbReference type="ChEBI" id="CHEBI:30413"/>
        <note>ligand shared with beta subunit</note>
    </ligand>
    <ligandPart>
        <name>Fe</name>
        <dbReference type="ChEBI" id="CHEBI:18248"/>
    </ligandPart>
</feature>
<name>PSBE_HUPLU</name>
<geneLocation type="chloroplast"/>
<comment type="function">
    <text evidence="1">This b-type cytochrome is tightly associated with the reaction center of photosystem II (PSII). PSII is a light-driven water:plastoquinone oxidoreductase that uses light energy to abstract electrons from H(2)O, generating O(2) and a proton gradient subsequently used for ATP formation. It consists of a core antenna complex that captures photons, and an electron transfer chain that converts photonic excitation into a charge separation.</text>
</comment>
<comment type="cofactor">
    <cofactor evidence="1">
        <name>heme b</name>
        <dbReference type="ChEBI" id="CHEBI:60344"/>
    </cofactor>
    <text evidence="1">With its partner (PsbF) binds heme. PSII binds additional chlorophylls, carotenoids and specific lipids.</text>
</comment>
<comment type="subunit">
    <text evidence="1">Heterodimer of an alpha subunit and a beta subunit. PSII is composed of 1 copy each of membrane proteins PsbA, PsbB, PsbC, PsbD, PsbE, PsbF, PsbH, PsbI, PsbJ, PsbK, PsbL, PsbM, PsbT, PsbX, PsbY, PsbZ, Psb30/Ycf12, at least 3 peripheral proteins of the oxygen-evolving complex and a large number of cofactors. It forms dimeric complexes.</text>
</comment>
<comment type="subcellular location">
    <subcellularLocation>
        <location evidence="1">Plastid</location>
        <location evidence="1">Chloroplast thylakoid membrane</location>
        <topology evidence="1">Single-pass membrane protein</topology>
    </subcellularLocation>
</comment>
<comment type="similarity">
    <text evidence="1">Belongs to the PsbE/PsbF family.</text>
</comment>
<proteinExistence type="inferred from homology"/>
<organism>
    <name type="scientific">Huperzia lucidula</name>
    <name type="common">Shining clubmoss</name>
    <name type="synonym">Lycopodium lucidulum</name>
    <dbReference type="NCBI Taxonomy" id="37429"/>
    <lineage>
        <taxon>Eukaryota</taxon>
        <taxon>Viridiplantae</taxon>
        <taxon>Streptophyta</taxon>
        <taxon>Embryophyta</taxon>
        <taxon>Tracheophyta</taxon>
        <taxon>Lycopodiopsida</taxon>
        <taxon>Lycopodiales</taxon>
        <taxon>Lycopodiaceae</taxon>
        <taxon>Huperzioideae</taxon>
        <taxon>Huperzia</taxon>
    </lineage>
</organism>
<dbReference type="EMBL" id="AY660566">
    <property type="protein sequence ID" value="AAT80709.1"/>
    <property type="molecule type" value="Genomic_DNA"/>
</dbReference>
<dbReference type="RefSeq" id="YP_209512.1">
    <property type="nucleotide sequence ID" value="NC_006861.1"/>
</dbReference>
<dbReference type="SMR" id="Q5SD43"/>
<dbReference type="GeneID" id="3283751"/>
<dbReference type="GO" id="GO:0009535">
    <property type="term" value="C:chloroplast thylakoid membrane"/>
    <property type="evidence" value="ECO:0007669"/>
    <property type="project" value="UniProtKB-SubCell"/>
</dbReference>
<dbReference type="GO" id="GO:0009539">
    <property type="term" value="C:photosystem II reaction center"/>
    <property type="evidence" value="ECO:0007669"/>
    <property type="project" value="InterPro"/>
</dbReference>
<dbReference type="GO" id="GO:0009055">
    <property type="term" value="F:electron transfer activity"/>
    <property type="evidence" value="ECO:0007669"/>
    <property type="project" value="UniProtKB-UniRule"/>
</dbReference>
<dbReference type="GO" id="GO:0020037">
    <property type="term" value="F:heme binding"/>
    <property type="evidence" value="ECO:0007669"/>
    <property type="project" value="InterPro"/>
</dbReference>
<dbReference type="GO" id="GO:0005506">
    <property type="term" value="F:iron ion binding"/>
    <property type="evidence" value="ECO:0007669"/>
    <property type="project" value="UniProtKB-UniRule"/>
</dbReference>
<dbReference type="GO" id="GO:0009767">
    <property type="term" value="P:photosynthetic electron transport chain"/>
    <property type="evidence" value="ECO:0007669"/>
    <property type="project" value="InterPro"/>
</dbReference>
<dbReference type="Gene3D" id="1.20.5.860">
    <property type="entry name" value="Photosystem II cytochrome b559, alpha subunit"/>
    <property type="match status" value="1"/>
</dbReference>
<dbReference type="HAMAP" id="MF_00642">
    <property type="entry name" value="PSII_PsbE"/>
    <property type="match status" value="1"/>
</dbReference>
<dbReference type="InterPro" id="IPR006217">
    <property type="entry name" value="PSII_cyt_b559_asu"/>
</dbReference>
<dbReference type="InterPro" id="IPR037025">
    <property type="entry name" value="PSII_cyt_b559_asu_sf"/>
</dbReference>
<dbReference type="InterPro" id="IPR006216">
    <property type="entry name" value="PSII_cyt_b559_CS"/>
</dbReference>
<dbReference type="InterPro" id="IPR013081">
    <property type="entry name" value="PSII_cyt_b559_N"/>
</dbReference>
<dbReference type="InterPro" id="IPR013082">
    <property type="entry name" value="PSII_cytb559_asu_lum"/>
</dbReference>
<dbReference type="NCBIfam" id="TIGR01332">
    <property type="entry name" value="cyt_b559_alpha"/>
    <property type="match status" value="1"/>
</dbReference>
<dbReference type="PANTHER" id="PTHR33391">
    <property type="entry name" value="CYTOCHROME B559 SUBUNIT BETA-RELATED"/>
    <property type="match status" value="1"/>
</dbReference>
<dbReference type="PANTHER" id="PTHR33391:SF9">
    <property type="entry name" value="CYTOCHROME B559 SUBUNIT BETA-RELATED"/>
    <property type="match status" value="1"/>
</dbReference>
<dbReference type="Pfam" id="PF00283">
    <property type="entry name" value="Cytochrom_B559"/>
    <property type="match status" value="1"/>
</dbReference>
<dbReference type="Pfam" id="PF00284">
    <property type="entry name" value="Cytochrom_B559a"/>
    <property type="match status" value="1"/>
</dbReference>
<dbReference type="PIRSF" id="PIRSF000036">
    <property type="entry name" value="PsbE"/>
    <property type="match status" value="1"/>
</dbReference>
<dbReference type="SUPFAM" id="SSF161045">
    <property type="entry name" value="Cytochrome b559 subunits"/>
    <property type="match status" value="1"/>
</dbReference>
<dbReference type="PROSITE" id="PS00537">
    <property type="entry name" value="CYTOCHROME_B559"/>
    <property type="match status" value="1"/>
</dbReference>
<protein>
    <recommendedName>
        <fullName evidence="1">Cytochrome b559 subunit alpha</fullName>
    </recommendedName>
    <alternativeName>
        <fullName evidence="1">PSII reaction center subunit V</fullName>
    </alternativeName>
</protein>